<comment type="function">
    <text evidence="1">Catalyzes the radical-mediated insertion of two sulfur atoms into the C-6 and C-8 positions of the octanoyl moiety bound to the lipoyl domains of lipoate-dependent enzymes, thereby converting the octanoylated domains into lipoylated derivatives.</text>
</comment>
<comment type="catalytic activity">
    <reaction evidence="1">
        <text>[[Fe-S] cluster scaffold protein carrying a second [4Fe-4S](2+) cluster] + N(6)-octanoyl-L-lysyl-[protein] + 2 oxidized [2Fe-2S]-[ferredoxin] + 2 S-adenosyl-L-methionine + 4 H(+) = [[Fe-S] cluster scaffold protein] + N(6)-[(R)-dihydrolipoyl]-L-lysyl-[protein] + 4 Fe(3+) + 2 hydrogen sulfide + 2 5'-deoxyadenosine + 2 L-methionine + 2 reduced [2Fe-2S]-[ferredoxin]</text>
        <dbReference type="Rhea" id="RHEA:16585"/>
        <dbReference type="Rhea" id="RHEA-COMP:9928"/>
        <dbReference type="Rhea" id="RHEA-COMP:10000"/>
        <dbReference type="Rhea" id="RHEA-COMP:10001"/>
        <dbReference type="Rhea" id="RHEA-COMP:10475"/>
        <dbReference type="Rhea" id="RHEA-COMP:14568"/>
        <dbReference type="Rhea" id="RHEA-COMP:14569"/>
        <dbReference type="ChEBI" id="CHEBI:15378"/>
        <dbReference type="ChEBI" id="CHEBI:17319"/>
        <dbReference type="ChEBI" id="CHEBI:29034"/>
        <dbReference type="ChEBI" id="CHEBI:29919"/>
        <dbReference type="ChEBI" id="CHEBI:33722"/>
        <dbReference type="ChEBI" id="CHEBI:33737"/>
        <dbReference type="ChEBI" id="CHEBI:33738"/>
        <dbReference type="ChEBI" id="CHEBI:57844"/>
        <dbReference type="ChEBI" id="CHEBI:59789"/>
        <dbReference type="ChEBI" id="CHEBI:78809"/>
        <dbReference type="ChEBI" id="CHEBI:83100"/>
        <dbReference type="EC" id="2.8.1.8"/>
    </reaction>
</comment>
<comment type="cofactor">
    <cofactor evidence="1">
        <name>[4Fe-4S] cluster</name>
        <dbReference type="ChEBI" id="CHEBI:49883"/>
    </cofactor>
    <text evidence="1">Binds 2 [4Fe-4S] clusters per subunit. One cluster is coordinated with 3 cysteines and an exchangeable S-adenosyl-L-methionine.</text>
</comment>
<comment type="pathway">
    <text evidence="1">Protein modification; protein lipoylation via endogenous pathway; protein N(6)-(lipoyl)lysine from octanoyl-[acyl-carrier-protein]: step 2/2.</text>
</comment>
<comment type="subcellular location">
    <subcellularLocation>
        <location>Plastid</location>
        <location>Chloroplast</location>
    </subcellularLocation>
</comment>
<comment type="similarity">
    <text evidence="1">Belongs to the radical SAM superfamily. Lipoyl synthase family.</text>
</comment>
<name>LISC2_ORYSI</name>
<dbReference type="EC" id="2.8.1.8" evidence="1"/>
<dbReference type="EMBL" id="CM000130">
    <property type="protein sequence ID" value="EEC79513.1"/>
    <property type="molecule type" value="Genomic_DNA"/>
</dbReference>
<dbReference type="SMR" id="B8B016"/>
<dbReference type="STRING" id="39946.B8B016"/>
<dbReference type="EnsemblPlants" id="BGIOSGA020168-TA">
    <property type="protein sequence ID" value="BGIOSGA020168-PA"/>
    <property type="gene ID" value="BGIOSGA020168"/>
</dbReference>
<dbReference type="EnsemblPlants" id="OsGoSa_05g0023010.01">
    <property type="protein sequence ID" value="OsGoSa_05g0023010.01"/>
    <property type="gene ID" value="OsGoSa_05g0023010"/>
</dbReference>
<dbReference type="EnsemblPlants" id="OsIR64_05g0022770.02">
    <property type="protein sequence ID" value="OsIR64_05g0022770.02"/>
    <property type="gene ID" value="OsIR64_05g0022770"/>
</dbReference>
<dbReference type="EnsemblPlants" id="OsKYG_05g0022840.01">
    <property type="protein sequence ID" value="OsKYG_05g0022840.01"/>
    <property type="gene ID" value="OsKYG_05g0022840"/>
</dbReference>
<dbReference type="EnsemblPlants" id="OsLaMu_05g0023040.01">
    <property type="protein sequence ID" value="OsLaMu_05g0023040.01"/>
    <property type="gene ID" value="OsLaMu_05g0023040"/>
</dbReference>
<dbReference type="EnsemblPlants" id="OsLima_05g0022940.01">
    <property type="protein sequence ID" value="OsLima_05g0022940.01"/>
    <property type="gene ID" value="OsLima_05g0022940"/>
</dbReference>
<dbReference type="EnsemblPlants" id="OsLiXu_05g0023030.01">
    <property type="protein sequence ID" value="OsLiXu_05g0023030.01"/>
    <property type="gene ID" value="OsLiXu_05g0023030"/>
</dbReference>
<dbReference type="EnsemblPlants" id="OsZS97_05G023260_02">
    <property type="protein sequence ID" value="OsZS97_05G023260_02"/>
    <property type="gene ID" value="OsZS97_05G023260"/>
</dbReference>
<dbReference type="Gramene" id="BGIOSGA020168-TA">
    <property type="protein sequence ID" value="BGIOSGA020168-PA"/>
    <property type="gene ID" value="BGIOSGA020168"/>
</dbReference>
<dbReference type="Gramene" id="OsGoSa_05g0023010.01">
    <property type="protein sequence ID" value="OsGoSa_05g0023010.01"/>
    <property type="gene ID" value="OsGoSa_05g0023010"/>
</dbReference>
<dbReference type="Gramene" id="OsIR64_05g0022770.02">
    <property type="protein sequence ID" value="OsIR64_05g0022770.02"/>
    <property type="gene ID" value="OsIR64_05g0022770"/>
</dbReference>
<dbReference type="Gramene" id="OsKYG_05g0022840.01">
    <property type="protein sequence ID" value="OsKYG_05g0022840.01"/>
    <property type="gene ID" value="OsKYG_05g0022840"/>
</dbReference>
<dbReference type="Gramene" id="OsLaMu_05g0023040.01">
    <property type="protein sequence ID" value="OsLaMu_05g0023040.01"/>
    <property type="gene ID" value="OsLaMu_05g0023040"/>
</dbReference>
<dbReference type="Gramene" id="OsLima_05g0022940.01">
    <property type="protein sequence ID" value="OsLima_05g0022940.01"/>
    <property type="gene ID" value="OsLima_05g0022940"/>
</dbReference>
<dbReference type="Gramene" id="OsLiXu_05g0023030.01">
    <property type="protein sequence ID" value="OsLiXu_05g0023030.01"/>
    <property type="gene ID" value="OsLiXu_05g0023030"/>
</dbReference>
<dbReference type="Gramene" id="OsZS97_05G023260_02">
    <property type="protein sequence ID" value="OsZS97_05G023260_02"/>
    <property type="gene ID" value="OsZS97_05G023260"/>
</dbReference>
<dbReference type="HOGENOM" id="CLU_033144_2_0_1"/>
<dbReference type="OMA" id="IRCESKD"/>
<dbReference type="OrthoDB" id="3231at2759"/>
<dbReference type="UniPathway" id="UPA00538">
    <property type="reaction ID" value="UER00593"/>
</dbReference>
<dbReference type="Proteomes" id="UP000007015">
    <property type="component" value="Chromosome 5"/>
</dbReference>
<dbReference type="GO" id="GO:0009507">
    <property type="term" value="C:chloroplast"/>
    <property type="evidence" value="ECO:0007669"/>
    <property type="project" value="UniProtKB-SubCell"/>
</dbReference>
<dbReference type="GO" id="GO:0005739">
    <property type="term" value="C:mitochondrion"/>
    <property type="evidence" value="ECO:0007669"/>
    <property type="project" value="TreeGrafter"/>
</dbReference>
<dbReference type="GO" id="GO:0051539">
    <property type="term" value="F:4 iron, 4 sulfur cluster binding"/>
    <property type="evidence" value="ECO:0007669"/>
    <property type="project" value="UniProtKB-UniRule"/>
</dbReference>
<dbReference type="GO" id="GO:0016992">
    <property type="term" value="F:lipoate synthase activity"/>
    <property type="evidence" value="ECO:0007669"/>
    <property type="project" value="UniProtKB-UniRule"/>
</dbReference>
<dbReference type="GO" id="GO:0046872">
    <property type="term" value="F:metal ion binding"/>
    <property type="evidence" value="ECO:0007669"/>
    <property type="project" value="UniProtKB-KW"/>
</dbReference>
<dbReference type="CDD" id="cd01335">
    <property type="entry name" value="Radical_SAM"/>
    <property type="match status" value="1"/>
</dbReference>
<dbReference type="FunFam" id="3.20.20.70:FF:000036">
    <property type="entry name" value="Lipoyl synthase, mitochondrial"/>
    <property type="match status" value="1"/>
</dbReference>
<dbReference type="Gene3D" id="3.20.20.70">
    <property type="entry name" value="Aldolase class I"/>
    <property type="match status" value="1"/>
</dbReference>
<dbReference type="HAMAP" id="MF_00206">
    <property type="entry name" value="Lipoyl_synth"/>
    <property type="match status" value="1"/>
</dbReference>
<dbReference type="HAMAP" id="MF_03129">
    <property type="entry name" value="Lipoyl_synth_plantC"/>
    <property type="match status" value="1"/>
</dbReference>
<dbReference type="InterPro" id="IPR013785">
    <property type="entry name" value="Aldolase_TIM"/>
</dbReference>
<dbReference type="InterPro" id="IPR006638">
    <property type="entry name" value="Elp3/MiaA/NifB-like_rSAM"/>
</dbReference>
<dbReference type="InterPro" id="IPR031691">
    <property type="entry name" value="LIAS_N"/>
</dbReference>
<dbReference type="InterPro" id="IPR003698">
    <property type="entry name" value="Lipoyl_synth"/>
</dbReference>
<dbReference type="InterPro" id="IPR027526">
    <property type="entry name" value="Lipoyl_synth_chlpt"/>
</dbReference>
<dbReference type="InterPro" id="IPR007197">
    <property type="entry name" value="rSAM"/>
</dbReference>
<dbReference type="NCBIfam" id="TIGR00510">
    <property type="entry name" value="lipA"/>
    <property type="match status" value="1"/>
</dbReference>
<dbReference type="NCBIfam" id="NF004019">
    <property type="entry name" value="PRK05481.1"/>
    <property type="match status" value="1"/>
</dbReference>
<dbReference type="NCBIfam" id="NF009544">
    <property type="entry name" value="PRK12928.1"/>
    <property type="match status" value="1"/>
</dbReference>
<dbReference type="PANTHER" id="PTHR10949">
    <property type="entry name" value="LIPOYL SYNTHASE"/>
    <property type="match status" value="1"/>
</dbReference>
<dbReference type="PANTHER" id="PTHR10949:SF38">
    <property type="entry name" value="LIPOYL SYNTHASE, CHLOROPLASTIC"/>
    <property type="match status" value="1"/>
</dbReference>
<dbReference type="Pfam" id="PF16881">
    <property type="entry name" value="LIAS_N"/>
    <property type="match status" value="1"/>
</dbReference>
<dbReference type="Pfam" id="PF04055">
    <property type="entry name" value="Radical_SAM"/>
    <property type="match status" value="1"/>
</dbReference>
<dbReference type="SFLD" id="SFLDF00271">
    <property type="entry name" value="lipoyl_synthase"/>
    <property type="match status" value="1"/>
</dbReference>
<dbReference type="SFLD" id="SFLDG01058">
    <property type="entry name" value="lipoyl_synthase_like"/>
    <property type="match status" value="1"/>
</dbReference>
<dbReference type="SMART" id="SM00729">
    <property type="entry name" value="Elp3"/>
    <property type="match status" value="1"/>
</dbReference>
<dbReference type="SUPFAM" id="SSF102114">
    <property type="entry name" value="Radical SAM enzymes"/>
    <property type="match status" value="1"/>
</dbReference>
<dbReference type="PROSITE" id="PS51918">
    <property type="entry name" value="RADICAL_SAM"/>
    <property type="match status" value="1"/>
</dbReference>
<evidence type="ECO:0000255" key="1">
    <source>
        <dbReference type="HAMAP-Rule" id="MF_03129"/>
    </source>
</evidence>
<evidence type="ECO:0000255" key="2">
    <source>
        <dbReference type="PROSITE-ProRule" id="PRU01266"/>
    </source>
</evidence>
<keyword id="KW-0004">4Fe-4S</keyword>
<keyword id="KW-0150">Chloroplast</keyword>
<keyword id="KW-0408">Iron</keyword>
<keyword id="KW-0411">Iron-sulfur</keyword>
<keyword id="KW-0479">Metal-binding</keyword>
<keyword id="KW-0934">Plastid</keyword>
<keyword id="KW-1185">Reference proteome</keyword>
<keyword id="KW-0949">S-adenosyl-L-methionine</keyword>
<keyword id="KW-0808">Transferase</keyword>
<keyword id="KW-0809">Transit peptide</keyword>
<reference key="1">
    <citation type="journal article" date="2005" name="PLoS Biol.">
        <title>The genomes of Oryza sativa: a history of duplications.</title>
        <authorList>
            <person name="Yu J."/>
            <person name="Wang J."/>
            <person name="Lin W."/>
            <person name="Li S."/>
            <person name="Li H."/>
            <person name="Zhou J."/>
            <person name="Ni P."/>
            <person name="Dong W."/>
            <person name="Hu S."/>
            <person name="Zeng C."/>
            <person name="Zhang J."/>
            <person name="Zhang Y."/>
            <person name="Li R."/>
            <person name="Xu Z."/>
            <person name="Li S."/>
            <person name="Li X."/>
            <person name="Zheng H."/>
            <person name="Cong L."/>
            <person name="Lin L."/>
            <person name="Yin J."/>
            <person name="Geng J."/>
            <person name="Li G."/>
            <person name="Shi J."/>
            <person name="Liu J."/>
            <person name="Lv H."/>
            <person name="Li J."/>
            <person name="Wang J."/>
            <person name="Deng Y."/>
            <person name="Ran L."/>
            <person name="Shi X."/>
            <person name="Wang X."/>
            <person name="Wu Q."/>
            <person name="Li C."/>
            <person name="Ren X."/>
            <person name="Wang J."/>
            <person name="Wang X."/>
            <person name="Li D."/>
            <person name="Liu D."/>
            <person name="Zhang X."/>
            <person name="Ji Z."/>
            <person name="Zhao W."/>
            <person name="Sun Y."/>
            <person name="Zhang Z."/>
            <person name="Bao J."/>
            <person name="Han Y."/>
            <person name="Dong L."/>
            <person name="Ji J."/>
            <person name="Chen P."/>
            <person name="Wu S."/>
            <person name="Liu J."/>
            <person name="Xiao Y."/>
            <person name="Bu D."/>
            <person name="Tan J."/>
            <person name="Yang L."/>
            <person name="Ye C."/>
            <person name="Zhang J."/>
            <person name="Xu J."/>
            <person name="Zhou Y."/>
            <person name="Yu Y."/>
            <person name="Zhang B."/>
            <person name="Zhuang S."/>
            <person name="Wei H."/>
            <person name="Liu B."/>
            <person name="Lei M."/>
            <person name="Yu H."/>
            <person name="Li Y."/>
            <person name="Xu H."/>
            <person name="Wei S."/>
            <person name="He X."/>
            <person name="Fang L."/>
            <person name="Zhang Z."/>
            <person name="Zhang Y."/>
            <person name="Huang X."/>
            <person name="Su Z."/>
            <person name="Tong W."/>
            <person name="Li J."/>
            <person name="Tong Z."/>
            <person name="Li S."/>
            <person name="Ye J."/>
            <person name="Wang L."/>
            <person name="Fang L."/>
            <person name="Lei T."/>
            <person name="Chen C.-S."/>
            <person name="Chen H.-C."/>
            <person name="Xu Z."/>
            <person name="Li H."/>
            <person name="Huang H."/>
            <person name="Zhang F."/>
            <person name="Xu H."/>
            <person name="Li N."/>
            <person name="Zhao C."/>
            <person name="Li S."/>
            <person name="Dong L."/>
            <person name="Huang Y."/>
            <person name="Li L."/>
            <person name="Xi Y."/>
            <person name="Qi Q."/>
            <person name="Li W."/>
            <person name="Zhang B."/>
            <person name="Hu W."/>
            <person name="Zhang Y."/>
            <person name="Tian X."/>
            <person name="Jiao Y."/>
            <person name="Liang X."/>
            <person name="Jin J."/>
            <person name="Gao L."/>
            <person name="Zheng W."/>
            <person name="Hao B."/>
            <person name="Liu S.-M."/>
            <person name="Wang W."/>
            <person name="Yuan L."/>
            <person name="Cao M."/>
            <person name="McDermott J."/>
            <person name="Samudrala R."/>
            <person name="Wang J."/>
            <person name="Wong G.K.-S."/>
            <person name="Yang H."/>
        </authorList>
    </citation>
    <scope>NUCLEOTIDE SEQUENCE [LARGE SCALE GENOMIC DNA]</scope>
    <source>
        <strain>cv. 93-11</strain>
    </source>
</reference>
<feature type="transit peptide" description="Chloroplast" evidence="1">
    <location>
        <begin position="1"/>
        <end position="48"/>
    </location>
</feature>
<feature type="chain" id="PRO_0000398865" description="Lipoyl synthase 2, chloroplastic">
    <location>
        <begin position="49"/>
        <end position="384"/>
    </location>
</feature>
<feature type="domain" description="Radical SAM core" evidence="2">
    <location>
        <begin position="128"/>
        <end position="349"/>
    </location>
</feature>
<feature type="binding site" evidence="1">
    <location>
        <position position="108"/>
    </location>
    <ligand>
        <name>[4Fe-4S] cluster</name>
        <dbReference type="ChEBI" id="CHEBI:49883"/>
        <label>1</label>
    </ligand>
</feature>
<feature type="binding site" evidence="1">
    <location>
        <position position="113"/>
    </location>
    <ligand>
        <name>[4Fe-4S] cluster</name>
        <dbReference type="ChEBI" id="CHEBI:49883"/>
        <label>1</label>
    </ligand>
</feature>
<feature type="binding site" evidence="1">
    <location>
        <position position="119"/>
    </location>
    <ligand>
        <name>[4Fe-4S] cluster</name>
        <dbReference type="ChEBI" id="CHEBI:49883"/>
        <label>1</label>
    </ligand>
</feature>
<feature type="binding site" evidence="1">
    <location>
        <position position="145"/>
    </location>
    <ligand>
        <name>[4Fe-4S] cluster</name>
        <dbReference type="ChEBI" id="CHEBI:49883"/>
        <label>2</label>
        <note>4Fe-4S-S-AdoMet</note>
    </ligand>
</feature>
<feature type="binding site" evidence="1">
    <location>
        <position position="149"/>
    </location>
    <ligand>
        <name>[4Fe-4S] cluster</name>
        <dbReference type="ChEBI" id="CHEBI:49883"/>
        <label>2</label>
        <note>4Fe-4S-S-AdoMet</note>
    </ligand>
</feature>
<feature type="binding site" evidence="1">
    <location>
        <position position="152"/>
    </location>
    <ligand>
        <name>[4Fe-4S] cluster</name>
        <dbReference type="ChEBI" id="CHEBI:49883"/>
        <label>2</label>
        <note>4Fe-4S-S-AdoMet</note>
    </ligand>
</feature>
<feature type="binding site" evidence="1">
    <location>
        <position position="360"/>
    </location>
    <ligand>
        <name>[4Fe-4S] cluster</name>
        <dbReference type="ChEBI" id="CHEBI:49883"/>
        <label>1</label>
    </ligand>
</feature>
<organism>
    <name type="scientific">Oryza sativa subsp. indica</name>
    <name type="common">Rice</name>
    <dbReference type="NCBI Taxonomy" id="39946"/>
    <lineage>
        <taxon>Eukaryota</taxon>
        <taxon>Viridiplantae</taxon>
        <taxon>Streptophyta</taxon>
        <taxon>Embryophyta</taxon>
        <taxon>Tracheophyta</taxon>
        <taxon>Spermatophyta</taxon>
        <taxon>Magnoliopsida</taxon>
        <taxon>Liliopsida</taxon>
        <taxon>Poales</taxon>
        <taxon>Poaceae</taxon>
        <taxon>BOP clade</taxon>
        <taxon>Oryzoideae</taxon>
        <taxon>Oryzeae</taxon>
        <taxon>Oryzinae</taxon>
        <taxon>Oryza</taxon>
        <taxon>Oryza sativa</taxon>
    </lineage>
</organism>
<proteinExistence type="inferred from homology"/>
<gene>
    <name evidence="1" type="primary">LIP1P-2</name>
    <name type="ORF">OsI_20590</name>
</gene>
<accession>B8B016</accession>
<sequence length="384" mass="41545">MAAYCSRVYHHHPVSPSTMQGSLARPSIHAGSASLTFRARPNSVSIVRCDADSPPEGSAVAGWAPPGPYTGRDPAARKPAWLRQRAAQGEKYARLRESLGELKLNTVCVEAQCPNIGECWNGGGGAGGDGDGIATATIMLLGDTCTRGCRFCAVKTSNKPPPPDALEPLRTAVAVASWGVDYVVLTSVDRDDLPDGGSGHFAQTVKALKELKPGILVECLTSDFRGDLEAVSSLASSGLDVFAHNIETVRSLQRIVRDPRAAYDQSLAVLKHAKNCKDGMVTKSSIMLGLGETDEEVKQTMCDLRAIDVDILTLGQYLQPTERHLRVREYVTPEKFDFWKEYGESLGFLYVASGPLVRSSYRAGELFVQNLVRRKKAELAPTLQ</sequence>
<protein>
    <recommendedName>
        <fullName>Lipoyl synthase 2, chloroplastic</fullName>
        <ecNumber evidence="1">2.8.1.8</ecNumber>
    </recommendedName>
    <alternativeName>
        <fullName evidence="1">Lipoate synthase 2</fullName>
        <shortName evidence="1">LS 2</shortName>
        <shortName evidence="1">Lip-syn 2</shortName>
    </alternativeName>
    <alternativeName>
        <fullName evidence="1">Lipoate synthase, plastidial 2</fullName>
        <shortName evidence="1">LIP1p 2</shortName>
    </alternativeName>
    <alternativeName>
        <fullName evidence="1">Lipoic acid synthase 2</fullName>
    </alternativeName>
</protein>